<evidence type="ECO:0000250" key="1">
    <source>
        <dbReference type="UniProtKB" id="P36021"/>
    </source>
</evidence>
<evidence type="ECO:0000255" key="2"/>
<evidence type="ECO:0000256" key="3">
    <source>
        <dbReference type="SAM" id="MobiDB-lite"/>
    </source>
</evidence>
<evidence type="ECO:0000269" key="4">
    <source>
    </source>
</evidence>
<evidence type="ECO:0000269" key="5">
    <source>
    </source>
</evidence>
<evidence type="ECO:0000269" key="6">
    <source>
    </source>
</evidence>
<evidence type="ECO:0000269" key="7">
    <source>
    </source>
</evidence>
<evidence type="ECO:0000269" key="8">
    <source>
    </source>
</evidence>
<evidence type="ECO:0000305" key="9"/>
<evidence type="ECO:0000305" key="10">
    <source>
    </source>
</evidence>
<evidence type="ECO:0007744" key="11">
    <source>
    </source>
</evidence>
<sequence length="545" mass="60025">MALPSPASEEAEGPCQEANQEYQEPVCSPVPEPEPEPEPEPEPDPEPVPVPPPEPQPEPEPQPLPDPAPLPELGFEAEPVQEPEPTPTVETRGTARGFQPPEGGFGWIVVFAATWCNGSIFGIHNSVGILYSMLLEEEKEKNRQVEFQAAWVGALAMGMIFFCSPIVSIFTDRLGCRITATTGAAVAFIGLHTSSFTSSLSLRYFTYGILFGCGCSFAFQPSLVILGHYFQRRLGLANGVVSAGSSIFSMSFPFLIKMLGDKIKLAQTFQVLSTFMFVLTLLSLTYRPLLPSSQDTPSKRGAHTLRQRFLVQFRKYFNMRVFRQRTYRIWAFGIAAAALGYFVPYVHLMKYVEDKFKEIKETWVLLVCIGATSGLGRLVSGHISDSIPGLKKIYLQVLSFLLLGLMSMMIPLCRDFGGLIVVCLFLGLCDGFFITIMAPIAFELVGPMQASQAIGYLLGMMALPMIAGPPIAGLLRNCFGDYHVAFYFAGVPPIIGAVILFFVPLMHQRMFKKEQRDSSKDKMLSHDPDPNGELLPGSPTPEEPI</sequence>
<organism>
    <name type="scientific">Mus musculus</name>
    <name type="common">Mouse</name>
    <dbReference type="NCBI Taxonomy" id="10090"/>
    <lineage>
        <taxon>Eukaryota</taxon>
        <taxon>Metazoa</taxon>
        <taxon>Chordata</taxon>
        <taxon>Craniata</taxon>
        <taxon>Vertebrata</taxon>
        <taxon>Euteleostomi</taxon>
        <taxon>Mammalia</taxon>
        <taxon>Eutheria</taxon>
        <taxon>Euarchontoglires</taxon>
        <taxon>Glires</taxon>
        <taxon>Rodentia</taxon>
        <taxon>Myomorpha</taxon>
        <taxon>Muroidea</taxon>
        <taxon>Muridae</taxon>
        <taxon>Murinae</taxon>
        <taxon>Mus</taxon>
        <taxon>Mus</taxon>
    </lineage>
</organism>
<protein>
    <recommendedName>
        <fullName>Monocarboxylate transporter 8</fullName>
        <shortName>MCT 8</shortName>
    </recommendedName>
    <alternativeName>
        <fullName>Solute carrier family 16 member 2</fullName>
    </alternativeName>
    <alternativeName>
        <fullName>X-linked PEST-containing transporter</fullName>
    </alternativeName>
</protein>
<gene>
    <name type="primary">Slc16a2</name>
    <name type="synonym">Mct8</name>
    <name type="synonym">Xpct</name>
</gene>
<reference key="1">
    <citation type="journal article" date="1998" name="Genomics">
        <title>Cloning and localization of the murine Xpct gene: evidence for complex rearrangements during the evolution of the region around the Xist gene.</title>
        <authorList>
            <person name="Debrand E."/>
            <person name="Heard E."/>
            <person name="Avner P."/>
        </authorList>
    </citation>
    <scope>NUCLEOTIDE SEQUENCE [MRNA]</scope>
    <source>
        <strain>BALB/cJ</strain>
        <tissue>Liver</tissue>
    </source>
</reference>
<reference key="2">
    <citation type="journal article" date="2002" name="Genome Res.">
        <title>Comparative sequence analysis of the X-inactivation center region in mouse, human and bovine.</title>
        <authorList>
            <person name="Chureau C."/>
            <person name="Prissette M."/>
            <person name="Bourdet A."/>
            <person name="Barbe V."/>
            <person name="Cattolico L."/>
            <person name="Jones L."/>
            <person name="Eggen A."/>
            <person name="Avner P."/>
            <person name="Duret L."/>
        </authorList>
    </citation>
    <scope>NUCLEOTIDE SEQUENCE [GENOMIC DNA]</scope>
    <source>
        <strain>129/Sv</strain>
    </source>
</reference>
<reference key="3">
    <citation type="journal article" date="2004" name="Genome Res.">
        <title>The status, quality, and expansion of the NIH full-length cDNA project: the Mammalian Gene Collection (MGC).</title>
        <authorList>
            <consortium name="The MGC Project Team"/>
        </authorList>
    </citation>
    <scope>NUCLEOTIDE SEQUENCE [LARGE SCALE MRNA]</scope>
    <source>
        <strain>C57BL/6J</strain>
        <tissue>Olfactory epithelium</tissue>
    </source>
</reference>
<reference key="4">
    <citation type="journal article" date="2010" name="Cell">
        <title>A tissue-specific atlas of mouse protein phosphorylation and expression.</title>
        <authorList>
            <person name="Huttlin E.L."/>
            <person name="Jedrychowski M.P."/>
            <person name="Elias J.E."/>
            <person name="Goswami T."/>
            <person name="Rad R."/>
            <person name="Beausoleil S.A."/>
            <person name="Villen J."/>
            <person name="Haas W."/>
            <person name="Sowa M.E."/>
            <person name="Gygi S.P."/>
        </authorList>
    </citation>
    <scope>PHOSPHORYLATION [LARGE SCALE ANALYSIS] AT THR-540</scope>
    <scope>IDENTIFICATION BY MASS SPECTROMETRY [LARGE SCALE ANALYSIS]</scope>
    <source>
        <tissue>Brown adipose tissue</tissue>
        <tissue>Kidney</tissue>
    </source>
</reference>
<reference key="5">
    <citation type="journal article" date="2008" name="Endocrinology">
        <title>Expression of the thyroid hormone transporters monocarboxylate transporter-8 (SLC16A2) and organic ion transporter-14 (SLCO1C1) at the blood-brain barrier.</title>
        <authorList>
            <person name="Roberts L.M."/>
            <person name="Woodford K."/>
            <person name="Zhou M."/>
            <person name="Black D.S."/>
            <person name="Haggerty J.E."/>
            <person name="Tate E.H."/>
            <person name="Grindstaff K.K."/>
            <person name="Mengesha W."/>
            <person name="Raman C."/>
            <person name="Zerangue N."/>
        </authorList>
    </citation>
    <scope>SUBCELLULAR LOCATION</scope>
    <scope>TISSUE SPECIFICITY</scope>
</reference>
<reference key="6">
    <citation type="journal article" date="2009" name="Endocrinology">
        <title>Importance of monocarboxylate transporter 8 for the blood-brain barrier-dependent availability of 3,5,3'-triiodo-L-thyronine.</title>
        <authorList>
            <person name="Ceballos A."/>
            <person name="Belinchon M.M."/>
            <person name="Sanchez-Mendoza E."/>
            <person name="Grijota-Martinez C."/>
            <person name="Dumitrescu A.M."/>
            <person name="Refetoff S."/>
            <person name="Morte B."/>
            <person name="Bernal J."/>
        </authorList>
    </citation>
    <scope>FUNCTION</scope>
</reference>
<reference key="7">
    <citation type="journal article" date="2009" name="J. Neurosci.">
        <title>Neuronal 3',3,5-triiodothyronine (T3) uptake and behavioral phenotype of mice deficient in Mct8, the neuronal T3 transporter mutated in Allan-Herndon-Dudley syndrome.</title>
        <authorList>
            <person name="Wirth E.K."/>
            <person name="Roth S."/>
            <person name="Blechschmidt C."/>
            <person name="Hoelter S.M."/>
            <person name="Becker L."/>
            <person name="Racz I."/>
            <person name="Zimmer A."/>
            <person name="Klopstock T."/>
            <person name="Gailus-Durner V."/>
            <person name="Fuchs H."/>
            <person name="Wurst W."/>
            <person name="Naumann T."/>
            <person name="Braeuer A."/>
            <person name="de Angelis M.H."/>
            <person name="Koehrle J."/>
            <person name="Grueters A."/>
            <person name="Schweizer U."/>
        </authorList>
    </citation>
    <scope>DISRUPTION PHENOTYPE</scope>
    <scope>DEVELOPMENTAL STAGE</scope>
</reference>
<reference key="8">
    <citation type="journal article" date="2020" name="Thyroid">
        <title>Spatiotemporal changes of cerebral monocarboxylate transporter 8 expression.</title>
        <authorList>
            <person name="Wilpert N.M."/>
            <person name="Krueger M."/>
            <person name="Opitz R."/>
            <person name="Sebinger D."/>
            <person name="Paisdzior S."/>
            <person name="Mages B."/>
            <person name="Schulz A."/>
            <person name="Spranger J."/>
            <person name="Wirth E.K."/>
            <person name="Stachelscheid H."/>
            <person name="Mergenthaler P."/>
            <person name="Vajkoczy P."/>
            <person name="Krude H."/>
            <person name="Kuehnen P."/>
            <person name="Bechmann I."/>
            <person name="Biebermann H."/>
        </authorList>
    </citation>
    <scope>TISSUE SPECIFICITY</scope>
    <scope>DEVELOPMENTAL STAGE</scope>
</reference>
<reference key="9">
    <citation type="journal article" date="2019" name="Thyroid">
        <title>In Vitro Characterization of Human, Mouse, and Zebrafish MCT8 Orthologues.</title>
        <authorList>
            <person name="Groeneweg S."/>
            <person name="Kersseboom S."/>
            <person name="van den Berge A."/>
            <person name="Dolcetta-Capuzzo A."/>
            <person name="van Geest F.S."/>
            <person name="van Heerebeek R.E.A."/>
            <person name="Arjona F.J."/>
            <person name="Meima M.E."/>
            <person name="Peeters R.P."/>
            <person name="Visser W.E."/>
            <person name="Visser T.J."/>
        </authorList>
    </citation>
    <scope>FUNCTION</scope>
    <scope>TRANSPORTER ACTIVITY</scope>
</reference>
<name>MOT8_MOUSE</name>
<accession>O70324</accession>
<accession>Q8K3S9</accession>
<keyword id="KW-0007">Acetylation</keyword>
<keyword id="KW-1003">Cell membrane</keyword>
<keyword id="KW-0472">Membrane</keyword>
<keyword id="KW-0597">Phosphoprotein</keyword>
<keyword id="KW-1185">Reference proteome</keyword>
<keyword id="KW-0677">Repeat</keyword>
<keyword id="KW-0812">Transmembrane</keyword>
<keyword id="KW-1133">Transmembrane helix</keyword>
<keyword id="KW-0813">Transport</keyword>
<proteinExistence type="evidence at protein level"/>
<feature type="initiator methionine" description="Removed" evidence="1">
    <location>
        <position position="1"/>
    </location>
</feature>
<feature type="chain" id="PRO_0000211402" description="Monocarboxylate transporter 8">
    <location>
        <begin position="2"/>
        <end position="545"/>
    </location>
</feature>
<feature type="topological domain" description="Cytoplasmic" evidence="9">
    <location>
        <begin position="2"/>
        <end position="102"/>
    </location>
</feature>
<feature type="transmembrane region" description="Helical; Name=1" evidence="2">
    <location>
        <begin position="103"/>
        <end position="123"/>
    </location>
</feature>
<feature type="topological domain" description="Extracellular" evidence="9">
    <location>
        <begin position="124"/>
        <end position="149"/>
    </location>
</feature>
<feature type="transmembrane region" description="Helical; Name=2" evidence="2">
    <location>
        <begin position="150"/>
        <end position="170"/>
    </location>
</feature>
<feature type="topological domain" description="Cytoplasmic" evidence="9">
    <location>
        <begin position="171"/>
        <end position="177"/>
    </location>
</feature>
<feature type="transmembrane region" description="Helical; Name=3" evidence="2">
    <location>
        <begin position="178"/>
        <end position="198"/>
    </location>
</feature>
<feature type="topological domain" description="Extracellular" evidence="9">
    <location>
        <begin position="199"/>
        <end position="206"/>
    </location>
</feature>
<feature type="transmembrane region" description="Helical; Name=4" evidence="2">
    <location>
        <begin position="207"/>
        <end position="227"/>
    </location>
</feature>
<feature type="topological domain" description="Cytoplasmic" evidence="9">
    <location>
        <begin position="228"/>
        <end position="235"/>
    </location>
</feature>
<feature type="transmembrane region" description="Helical; Name=5" evidence="2">
    <location>
        <begin position="236"/>
        <end position="256"/>
    </location>
</feature>
<feature type="topological domain" description="Extracellular" evidence="9">
    <location>
        <begin position="257"/>
        <end position="264"/>
    </location>
</feature>
<feature type="transmembrane region" description="Helical; Name=6" evidence="2">
    <location>
        <begin position="265"/>
        <end position="285"/>
    </location>
</feature>
<feature type="topological domain" description="Cytoplasmic" evidence="9">
    <location>
        <begin position="286"/>
        <end position="328"/>
    </location>
</feature>
<feature type="transmembrane region" description="Helical; Name=7" evidence="2">
    <location>
        <begin position="329"/>
        <end position="349"/>
    </location>
</feature>
<feature type="topological domain" description="Extracellular" evidence="9">
    <location>
        <begin position="350"/>
        <end position="362"/>
    </location>
</feature>
<feature type="transmembrane region" description="Helical; Name=8" evidence="2">
    <location>
        <begin position="363"/>
        <end position="383"/>
    </location>
</feature>
<feature type="topological domain" description="Cytoplasmic" evidence="9">
    <location>
        <begin position="384"/>
        <end position="392"/>
    </location>
</feature>
<feature type="transmembrane region" description="Helical; Name=9" evidence="2">
    <location>
        <begin position="393"/>
        <end position="413"/>
    </location>
</feature>
<feature type="topological domain" description="Extracellular" evidence="9">
    <location>
        <begin position="414"/>
        <end position="415"/>
    </location>
</feature>
<feature type="transmembrane region" description="Helical; Name=10" evidence="2">
    <location>
        <begin position="416"/>
        <end position="436"/>
    </location>
</feature>
<feature type="topological domain" description="Cytoplasmic" evidence="9">
    <location>
        <begin position="437"/>
        <end position="453"/>
    </location>
</feature>
<feature type="transmembrane region" description="Helical; Name=11" evidence="2">
    <location>
        <begin position="454"/>
        <end position="474"/>
    </location>
</feature>
<feature type="topological domain" description="Extracellular" evidence="9">
    <location>
        <begin position="475"/>
        <end position="483"/>
    </location>
</feature>
<feature type="transmembrane region" description="Helical; Name=12" evidence="2">
    <location>
        <begin position="484"/>
        <end position="504"/>
    </location>
</feature>
<feature type="topological domain" description="Cytoplasmic" evidence="2">
    <location>
        <begin position="505"/>
        <end position="545"/>
    </location>
</feature>
<feature type="repeat" description="1">
    <location>
        <begin position="29"/>
        <end position="50"/>
    </location>
</feature>
<feature type="repeat" description="2">
    <location>
        <begin position="51"/>
        <end position="72"/>
    </location>
</feature>
<feature type="region of interest" description="Disordered" evidence="3">
    <location>
        <begin position="1"/>
        <end position="98"/>
    </location>
</feature>
<feature type="region of interest" description="2 X 22 AA approximate tandem repeats">
    <location>
        <begin position="29"/>
        <end position="72"/>
    </location>
</feature>
<feature type="region of interest" description="Disordered" evidence="3">
    <location>
        <begin position="514"/>
        <end position="545"/>
    </location>
</feature>
<feature type="compositionally biased region" description="Acidic residues" evidence="3">
    <location>
        <begin position="33"/>
        <end position="45"/>
    </location>
</feature>
<feature type="compositionally biased region" description="Pro residues" evidence="3">
    <location>
        <begin position="46"/>
        <end position="70"/>
    </location>
</feature>
<feature type="compositionally biased region" description="Basic and acidic residues" evidence="3">
    <location>
        <begin position="514"/>
        <end position="529"/>
    </location>
</feature>
<feature type="modified residue" description="N-acetylalanine" evidence="1">
    <location>
        <position position="2"/>
    </location>
</feature>
<feature type="modified residue" description="Phosphothreonine" evidence="11">
    <location>
        <position position="540"/>
    </location>
</feature>
<feature type="sequence conflict" description="In Ref. 1." evidence="9" ref="1">
    <original>Q</original>
    <variation>QPLPDPAPLPELGFEAEPEPQ</variation>
    <location>
        <position position="62"/>
    </location>
</feature>
<feature type="sequence conflict" description="In Ref. 1; AAC40078." evidence="9" ref="1">
    <original>G</original>
    <variation>D</variation>
    <location>
        <position position="227"/>
    </location>
</feature>
<comment type="function">
    <text evidence="5 7">Specific thyroid hormone transmembrane transporter, that mediates both uptake and efflux of thyroid hormones across the cell membrane independently of pH or a Na(+) gradient (PubMed:31436139). Major substrates are the iodothyronines T3 and T4 and to a lesser extent rT3 and 3,3-diiodothyronine (3,3'-T2). Acts as an important mediator of thyroid hormone transport, especially T3, through the blood-brain barrier (PubMed:19147674).</text>
</comment>
<comment type="catalytic activity">
    <reaction evidence="7">
        <text>3,3',5-triiodo-L-thyronine(out) = 3,3',5-triiodo-L-thyronine(in)</text>
        <dbReference type="Rhea" id="RHEA:71811"/>
        <dbReference type="ChEBI" id="CHEBI:533015"/>
    </reaction>
    <physiologicalReaction direction="left-to-right" evidence="10">
        <dbReference type="Rhea" id="RHEA:71812"/>
    </physiologicalReaction>
    <physiologicalReaction direction="right-to-left" evidence="10">
        <dbReference type="Rhea" id="RHEA:71813"/>
    </physiologicalReaction>
</comment>
<comment type="catalytic activity">
    <reaction evidence="7">
        <text>3,3',5'-triiodo-L-thyronine(out) = 3,3',5'-triiodo-L-thyronine(in)</text>
        <dbReference type="Rhea" id="RHEA:71815"/>
        <dbReference type="ChEBI" id="CHEBI:57261"/>
    </reaction>
    <physiologicalReaction direction="left-to-right" evidence="10">
        <dbReference type="Rhea" id="RHEA:71816"/>
    </physiologicalReaction>
    <physiologicalReaction direction="right-to-left" evidence="10">
        <dbReference type="Rhea" id="RHEA:71817"/>
    </physiologicalReaction>
</comment>
<comment type="catalytic activity">
    <reaction evidence="7">
        <text>L-thyroxine(out) = L-thyroxine(in)</text>
        <dbReference type="Rhea" id="RHEA:71819"/>
        <dbReference type="ChEBI" id="CHEBI:58448"/>
    </reaction>
    <physiologicalReaction direction="left-to-right" evidence="10">
        <dbReference type="Rhea" id="RHEA:71820"/>
    </physiologicalReaction>
    <physiologicalReaction direction="right-to-left" evidence="10">
        <dbReference type="Rhea" id="RHEA:71821"/>
    </physiologicalReaction>
</comment>
<comment type="catalytic activity">
    <reaction evidence="7">
        <text>3,3'-diiodo-L-thyronine(out) = 3,3'-diiodo-L-thyronine(in)</text>
        <dbReference type="Rhea" id="RHEA:71823"/>
        <dbReference type="ChEBI" id="CHEBI:176514"/>
    </reaction>
    <physiologicalReaction direction="left-to-right" evidence="10">
        <dbReference type="Rhea" id="RHEA:71824"/>
    </physiologicalReaction>
    <physiologicalReaction direction="right-to-left" evidence="10">
        <dbReference type="Rhea" id="RHEA:71825"/>
    </physiologicalReaction>
</comment>
<comment type="subunit">
    <text evidence="1">Monomer (By similarity). Homodimer (By similarity). Homooligomer (By similarity).</text>
</comment>
<comment type="subcellular location">
    <subcellularLocation>
        <location evidence="4">Cell membrane</location>
        <topology evidence="2">Multi-pass membrane protein</topology>
    </subcellularLocation>
    <subcellularLocation>
        <location evidence="4">Apical cell membrane</location>
        <topology evidence="2">Multi-pass membrane protein</topology>
    </subcellularLocation>
</comment>
<comment type="tissue specificity">
    <text evidence="4">Expressed in cerebral microvessels.</text>
</comment>
<comment type="developmental stage">
    <text evidence="8">Strong expression in the brain barriers and many subpopulations of neurons, including cortical and cerebellar neurons at postnatal day 6. Decrease expression in neurons upon aging, whereas expression in the blood-brain barrier and blood-cerebrospinal fluid barrier do not change upon aging (at protein level).</text>
</comment>
<comment type="disruption phenotype">
    <text evidence="6">Deficient mice display abnormal thyroid hormone metabolism with no apparent neurological phenotype.</text>
</comment>
<comment type="similarity">
    <text evidence="9">Belongs to the major facilitator superfamily. Monocarboxylate porter (TC 2.A.1.13) family.</text>
</comment>
<dbReference type="EMBL" id="AF045692">
    <property type="protein sequence ID" value="AAC40078.1"/>
    <property type="molecule type" value="mRNA"/>
</dbReference>
<dbReference type="EMBL" id="AJ421478">
    <property type="protein sequence ID" value="CAD33931.1"/>
    <property type="molecule type" value="Genomic_DNA"/>
</dbReference>
<dbReference type="EMBL" id="BC080678">
    <property type="protein sequence ID" value="AAH80678.1"/>
    <property type="molecule type" value="mRNA"/>
</dbReference>
<dbReference type="CCDS" id="CCDS30330.1"/>
<dbReference type="RefSeq" id="NP_033223.2">
    <property type="nucleotide sequence ID" value="NM_009197.2"/>
</dbReference>
<dbReference type="SMR" id="O70324"/>
<dbReference type="FunCoup" id="O70324">
    <property type="interactions" value="196"/>
</dbReference>
<dbReference type="STRING" id="10090.ENSMUSP00000037629"/>
<dbReference type="TCDB" id="2.A.1.13.3">
    <property type="family name" value="the major facilitator superfamily (mfs)"/>
</dbReference>
<dbReference type="GlyGen" id="O70324">
    <property type="glycosylation" value="2 sites"/>
</dbReference>
<dbReference type="iPTMnet" id="O70324"/>
<dbReference type="PhosphoSitePlus" id="O70324"/>
<dbReference type="SwissPalm" id="O70324"/>
<dbReference type="jPOST" id="O70324"/>
<dbReference type="PaxDb" id="10090-ENSMUSP00000037629"/>
<dbReference type="PeptideAtlas" id="O70324"/>
<dbReference type="ProteomicsDB" id="291388"/>
<dbReference type="Antibodypedia" id="522">
    <property type="antibodies" value="179 antibodies from 30 providers"/>
</dbReference>
<dbReference type="DNASU" id="20502"/>
<dbReference type="Ensembl" id="ENSMUST00000042664.10">
    <property type="protein sequence ID" value="ENSMUSP00000037629.6"/>
    <property type="gene ID" value="ENSMUSG00000033965.11"/>
</dbReference>
<dbReference type="GeneID" id="20502"/>
<dbReference type="KEGG" id="mmu:20502"/>
<dbReference type="UCSC" id="uc009tzy.1">
    <property type="organism name" value="mouse"/>
</dbReference>
<dbReference type="AGR" id="MGI:1203732"/>
<dbReference type="CTD" id="6567"/>
<dbReference type="MGI" id="MGI:1203732">
    <property type="gene designation" value="Slc16a2"/>
</dbReference>
<dbReference type="VEuPathDB" id="HostDB:ENSMUSG00000033965"/>
<dbReference type="eggNOG" id="KOG2504">
    <property type="taxonomic scope" value="Eukaryota"/>
</dbReference>
<dbReference type="GeneTree" id="ENSGT00940000159450"/>
<dbReference type="HOGENOM" id="CLU_001265_59_5_1"/>
<dbReference type="InParanoid" id="O70324"/>
<dbReference type="OMA" id="AWCNGSI"/>
<dbReference type="OrthoDB" id="6499973at2759"/>
<dbReference type="PhylomeDB" id="O70324"/>
<dbReference type="TreeFam" id="TF313792"/>
<dbReference type="Reactome" id="R-MMU-879518">
    <property type="pathway name" value="Transport of organic anions"/>
</dbReference>
<dbReference type="BioGRID-ORCS" id="20502">
    <property type="hits" value="5 hits in 78 CRISPR screens"/>
</dbReference>
<dbReference type="ChiTaRS" id="Slc16a2">
    <property type="organism name" value="mouse"/>
</dbReference>
<dbReference type="PRO" id="PR:O70324"/>
<dbReference type="Proteomes" id="UP000000589">
    <property type="component" value="Chromosome X"/>
</dbReference>
<dbReference type="RNAct" id="O70324">
    <property type="molecule type" value="protein"/>
</dbReference>
<dbReference type="Bgee" id="ENSMUSG00000033965">
    <property type="expression patterns" value="Expressed in choroid plexus of fourth ventricle and 225 other cell types or tissues"/>
</dbReference>
<dbReference type="ExpressionAtlas" id="O70324">
    <property type="expression patterns" value="baseline and differential"/>
</dbReference>
<dbReference type="GO" id="GO:0016324">
    <property type="term" value="C:apical plasma membrane"/>
    <property type="evidence" value="ECO:0000314"/>
    <property type="project" value="UniProtKB"/>
</dbReference>
<dbReference type="GO" id="GO:0005886">
    <property type="term" value="C:plasma membrane"/>
    <property type="evidence" value="ECO:0000250"/>
    <property type="project" value="UniProtKB"/>
</dbReference>
<dbReference type="GO" id="GO:0015171">
    <property type="term" value="F:amino acid transmembrane transporter activity"/>
    <property type="evidence" value="ECO:0007669"/>
    <property type="project" value="Ensembl"/>
</dbReference>
<dbReference type="GO" id="GO:0042802">
    <property type="term" value="F:identical protein binding"/>
    <property type="evidence" value="ECO:0000250"/>
    <property type="project" value="UniProtKB"/>
</dbReference>
<dbReference type="GO" id="GO:0015349">
    <property type="term" value="F:thyroid hormone transmembrane transporter activity"/>
    <property type="evidence" value="ECO:0000314"/>
    <property type="project" value="UniProtKB"/>
</dbReference>
<dbReference type="GO" id="GO:0089718">
    <property type="term" value="P:amino acid import across plasma membrane"/>
    <property type="evidence" value="ECO:0007669"/>
    <property type="project" value="Ensembl"/>
</dbReference>
<dbReference type="GO" id="GO:0006520">
    <property type="term" value="P:amino acid metabolic process"/>
    <property type="evidence" value="ECO:0007669"/>
    <property type="project" value="Ensembl"/>
</dbReference>
<dbReference type="GO" id="GO:2000178">
    <property type="term" value="P:negative regulation of neural precursor cell proliferation"/>
    <property type="evidence" value="ECO:0007669"/>
    <property type="project" value="Ensembl"/>
</dbReference>
<dbReference type="GO" id="GO:0006590">
    <property type="term" value="P:thyroid hormone generation"/>
    <property type="evidence" value="ECO:0000315"/>
    <property type="project" value="MGI"/>
</dbReference>
<dbReference type="GO" id="GO:0070327">
    <property type="term" value="P:thyroid hormone transport"/>
    <property type="evidence" value="ECO:0000314"/>
    <property type="project" value="UniProtKB"/>
</dbReference>
<dbReference type="GO" id="GO:0070460">
    <property type="term" value="P:thyroid-stimulating hormone secretion"/>
    <property type="evidence" value="ECO:0000315"/>
    <property type="project" value="MGI"/>
</dbReference>
<dbReference type="GO" id="GO:0150104">
    <property type="term" value="P:transport across blood-brain barrier"/>
    <property type="evidence" value="ECO:0007669"/>
    <property type="project" value="Ensembl"/>
</dbReference>
<dbReference type="CDD" id="cd17420">
    <property type="entry name" value="MFS_MCT8_10"/>
    <property type="match status" value="1"/>
</dbReference>
<dbReference type="FunFam" id="1.20.1250.20:FF:000156">
    <property type="entry name" value="monocarboxylate transporter 8 isoform X1"/>
    <property type="match status" value="1"/>
</dbReference>
<dbReference type="FunFam" id="1.20.1250.20:FF:000179">
    <property type="entry name" value="Solute carrier family 16 member 2"/>
    <property type="match status" value="1"/>
</dbReference>
<dbReference type="Gene3D" id="1.20.1250.20">
    <property type="entry name" value="MFS general substrate transporter like domains"/>
    <property type="match status" value="2"/>
</dbReference>
<dbReference type="InterPro" id="IPR011701">
    <property type="entry name" value="MFS"/>
</dbReference>
<dbReference type="InterPro" id="IPR020846">
    <property type="entry name" value="MFS_dom"/>
</dbReference>
<dbReference type="InterPro" id="IPR036259">
    <property type="entry name" value="MFS_trans_sf"/>
</dbReference>
<dbReference type="InterPro" id="IPR050327">
    <property type="entry name" value="Proton-linked_MCT"/>
</dbReference>
<dbReference type="PANTHER" id="PTHR11360">
    <property type="entry name" value="MONOCARBOXYLATE TRANSPORTER"/>
    <property type="match status" value="1"/>
</dbReference>
<dbReference type="PANTHER" id="PTHR11360:SF123">
    <property type="entry name" value="MONOCARBOXYLATE TRANSPORTER 8"/>
    <property type="match status" value="1"/>
</dbReference>
<dbReference type="Pfam" id="PF07690">
    <property type="entry name" value="MFS_1"/>
    <property type="match status" value="1"/>
</dbReference>
<dbReference type="SUPFAM" id="SSF103473">
    <property type="entry name" value="MFS general substrate transporter"/>
    <property type="match status" value="1"/>
</dbReference>
<dbReference type="PROSITE" id="PS50850">
    <property type="entry name" value="MFS"/>
    <property type="match status" value="1"/>
</dbReference>